<dbReference type="EC" id="2.7.2.11" evidence="1"/>
<dbReference type="EMBL" id="CP000546">
    <property type="protein sequence ID" value="ABN00845.1"/>
    <property type="molecule type" value="Genomic_DNA"/>
</dbReference>
<dbReference type="RefSeq" id="WP_004194262.1">
    <property type="nucleotide sequence ID" value="NC_008836.1"/>
</dbReference>
<dbReference type="SMR" id="A2S5R7"/>
<dbReference type="GeneID" id="93061602"/>
<dbReference type="KEGG" id="bml:BMA10229_A1302"/>
<dbReference type="HOGENOM" id="CLU_025400_2_0_4"/>
<dbReference type="UniPathway" id="UPA00098">
    <property type="reaction ID" value="UER00359"/>
</dbReference>
<dbReference type="Proteomes" id="UP000002283">
    <property type="component" value="Chromosome I"/>
</dbReference>
<dbReference type="GO" id="GO:0005829">
    <property type="term" value="C:cytosol"/>
    <property type="evidence" value="ECO:0007669"/>
    <property type="project" value="TreeGrafter"/>
</dbReference>
<dbReference type="GO" id="GO:0005524">
    <property type="term" value="F:ATP binding"/>
    <property type="evidence" value="ECO:0007669"/>
    <property type="project" value="UniProtKB-KW"/>
</dbReference>
<dbReference type="GO" id="GO:0004349">
    <property type="term" value="F:glutamate 5-kinase activity"/>
    <property type="evidence" value="ECO:0007669"/>
    <property type="project" value="UniProtKB-UniRule"/>
</dbReference>
<dbReference type="GO" id="GO:0003723">
    <property type="term" value="F:RNA binding"/>
    <property type="evidence" value="ECO:0007669"/>
    <property type="project" value="InterPro"/>
</dbReference>
<dbReference type="GO" id="GO:0055129">
    <property type="term" value="P:L-proline biosynthetic process"/>
    <property type="evidence" value="ECO:0007669"/>
    <property type="project" value="UniProtKB-UniRule"/>
</dbReference>
<dbReference type="CDD" id="cd04242">
    <property type="entry name" value="AAK_G5K_ProB"/>
    <property type="match status" value="1"/>
</dbReference>
<dbReference type="CDD" id="cd21157">
    <property type="entry name" value="PUA_G5K"/>
    <property type="match status" value="1"/>
</dbReference>
<dbReference type="FunFam" id="2.30.130.10:FF:000007">
    <property type="entry name" value="Glutamate 5-kinase"/>
    <property type="match status" value="1"/>
</dbReference>
<dbReference type="FunFam" id="3.40.1160.10:FF:000018">
    <property type="entry name" value="Glutamate 5-kinase"/>
    <property type="match status" value="1"/>
</dbReference>
<dbReference type="Gene3D" id="3.40.1160.10">
    <property type="entry name" value="Acetylglutamate kinase-like"/>
    <property type="match status" value="1"/>
</dbReference>
<dbReference type="Gene3D" id="2.30.130.10">
    <property type="entry name" value="PUA domain"/>
    <property type="match status" value="1"/>
</dbReference>
<dbReference type="HAMAP" id="MF_00456">
    <property type="entry name" value="ProB"/>
    <property type="match status" value="1"/>
</dbReference>
<dbReference type="InterPro" id="IPR036393">
    <property type="entry name" value="AceGlu_kinase-like_sf"/>
</dbReference>
<dbReference type="InterPro" id="IPR001048">
    <property type="entry name" value="Asp/Glu/Uridylate_kinase"/>
</dbReference>
<dbReference type="InterPro" id="IPR041739">
    <property type="entry name" value="G5K_ProB"/>
</dbReference>
<dbReference type="InterPro" id="IPR001057">
    <property type="entry name" value="Glu/AcGlu_kinase"/>
</dbReference>
<dbReference type="InterPro" id="IPR011529">
    <property type="entry name" value="Glu_5kinase"/>
</dbReference>
<dbReference type="InterPro" id="IPR005715">
    <property type="entry name" value="Glu_5kinase/COase_Synthase"/>
</dbReference>
<dbReference type="InterPro" id="IPR019797">
    <property type="entry name" value="Glutamate_5-kinase_CS"/>
</dbReference>
<dbReference type="InterPro" id="IPR002478">
    <property type="entry name" value="PUA"/>
</dbReference>
<dbReference type="InterPro" id="IPR015947">
    <property type="entry name" value="PUA-like_sf"/>
</dbReference>
<dbReference type="InterPro" id="IPR036974">
    <property type="entry name" value="PUA_sf"/>
</dbReference>
<dbReference type="NCBIfam" id="TIGR01027">
    <property type="entry name" value="proB"/>
    <property type="match status" value="1"/>
</dbReference>
<dbReference type="PANTHER" id="PTHR43654">
    <property type="entry name" value="GLUTAMATE 5-KINASE"/>
    <property type="match status" value="1"/>
</dbReference>
<dbReference type="PANTHER" id="PTHR43654:SF1">
    <property type="entry name" value="ISOPENTENYL PHOSPHATE KINASE"/>
    <property type="match status" value="1"/>
</dbReference>
<dbReference type="Pfam" id="PF00696">
    <property type="entry name" value="AA_kinase"/>
    <property type="match status" value="1"/>
</dbReference>
<dbReference type="Pfam" id="PF01472">
    <property type="entry name" value="PUA"/>
    <property type="match status" value="1"/>
</dbReference>
<dbReference type="PIRSF" id="PIRSF000729">
    <property type="entry name" value="GK"/>
    <property type="match status" value="1"/>
</dbReference>
<dbReference type="PRINTS" id="PR00474">
    <property type="entry name" value="GLU5KINASE"/>
</dbReference>
<dbReference type="SMART" id="SM00359">
    <property type="entry name" value="PUA"/>
    <property type="match status" value="1"/>
</dbReference>
<dbReference type="SUPFAM" id="SSF53633">
    <property type="entry name" value="Carbamate kinase-like"/>
    <property type="match status" value="1"/>
</dbReference>
<dbReference type="SUPFAM" id="SSF88697">
    <property type="entry name" value="PUA domain-like"/>
    <property type="match status" value="1"/>
</dbReference>
<dbReference type="PROSITE" id="PS00902">
    <property type="entry name" value="GLUTAMATE_5_KINASE"/>
    <property type="match status" value="1"/>
</dbReference>
<dbReference type="PROSITE" id="PS50890">
    <property type="entry name" value="PUA"/>
    <property type="match status" value="1"/>
</dbReference>
<gene>
    <name evidence="1" type="primary">proB</name>
    <name type="ordered locus">BMA10229_A1302</name>
</gene>
<organism>
    <name type="scientific">Burkholderia mallei (strain NCTC 10229)</name>
    <dbReference type="NCBI Taxonomy" id="412022"/>
    <lineage>
        <taxon>Bacteria</taxon>
        <taxon>Pseudomonadati</taxon>
        <taxon>Pseudomonadota</taxon>
        <taxon>Betaproteobacteria</taxon>
        <taxon>Burkholderiales</taxon>
        <taxon>Burkholderiaceae</taxon>
        <taxon>Burkholderia</taxon>
        <taxon>pseudomallei group</taxon>
    </lineage>
</organism>
<keyword id="KW-0028">Amino-acid biosynthesis</keyword>
<keyword id="KW-0067">ATP-binding</keyword>
<keyword id="KW-0963">Cytoplasm</keyword>
<keyword id="KW-0418">Kinase</keyword>
<keyword id="KW-0547">Nucleotide-binding</keyword>
<keyword id="KW-0641">Proline biosynthesis</keyword>
<keyword id="KW-0808">Transferase</keyword>
<evidence type="ECO:0000255" key="1">
    <source>
        <dbReference type="HAMAP-Rule" id="MF_00456"/>
    </source>
</evidence>
<protein>
    <recommendedName>
        <fullName evidence="1">Glutamate 5-kinase</fullName>
        <ecNumber evidence="1">2.7.2.11</ecNumber>
    </recommendedName>
    <alternativeName>
        <fullName evidence="1">Gamma-glutamyl kinase</fullName>
        <shortName evidence="1">GK</shortName>
    </alternativeName>
</protein>
<accession>A2S5R7</accession>
<comment type="function">
    <text evidence="1">Catalyzes the transfer of a phosphate group to glutamate to form L-glutamate 5-phosphate.</text>
</comment>
<comment type="catalytic activity">
    <reaction evidence="1">
        <text>L-glutamate + ATP = L-glutamyl 5-phosphate + ADP</text>
        <dbReference type="Rhea" id="RHEA:14877"/>
        <dbReference type="ChEBI" id="CHEBI:29985"/>
        <dbReference type="ChEBI" id="CHEBI:30616"/>
        <dbReference type="ChEBI" id="CHEBI:58274"/>
        <dbReference type="ChEBI" id="CHEBI:456216"/>
        <dbReference type="EC" id="2.7.2.11"/>
    </reaction>
</comment>
<comment type="pathway">
    <text evidence="1">Amino-acid biosynthesis; L-proline biosynthesis; L-glutamate 5-semialdehyde from L-glutamate: step 1/2.</text>
</comment>
<comment type="subcellular location">
    <subcellularLocation>
        <location evidence="1">Cytoplasm</location>
    </subcellularLocation>
</comment>
<comment type="similarity">
    <text evidence="1">Belongs to the glutamate 5-kinase family.</text>
</comment>
<feature type="chain" id="PRO_1000081044" description="Glutamate 5-kinase">
    <location>
        <begin position="1"/>
        <end position="372"/>
    </location>
</feature>
<feature type="domain" description="PUA" evidence="1">
    <location>
        <begin position="280"/>
        <end position="358"/>
    </location>
</feature>
<feature type="binding site" evidence="1">
    <location>
        <position position="14"/>
    </location>
    <ligand>
        <name>ATP</name>
        <dbReference type="ChEBI" id="CHEBI:30616"/>
    </ligand>
</feature>
<feature type="binding site" evidence="1">
    <location>
        <position position="54"/>
    </location>
    <ligand>
        <name>substrate</name>
    </ligand>
</feature>
<feature type="binding site" evidence="1">
    <location>
        <position position="141"/>
    </location>
    <ligand>
        <name>substrate</name>
    </ligand>
</feature>
<feature type="binding site" evidence="1">
    <location>
        <position position="153"/>
    </location>
    <ligand>
        <name>substrate</name>
    </ligand>
</feature>
<feature type="binding site" evidence="1">
    <location>
        <begin position="173"/>
        <end position="174"/>
    </location>
    <ligand>
        <name>ATP</name>
        <dbReference type="ChEBI" id="CHEBI:30616"/>
    </ligand>
</feature>
<reference key="1">
    <citation type="journal article" date="2010" name="Genome Biol. Evol.">
        <title>Continuing evolution of Burkholderia mallei through genome reduction and large-scale rearrangements.</title>
        <authorList>
            <person name="Losada L."/>
            <person name="Ronning C.M."/>
            <person name="DeShazer D."/>
            <person name="Woods D."/>
            <person name="Fedorova N."/>
            <person name="Kim H.S."/>
            <person name="Shabalina S.A."/>
            <person name="Pearson T.R."/>
            <person name="Brinkac L."/>
            <person name="Tan P."/>
            <person name="Nandi T."/>
            <person name="Crabtree J."/>
            <person name="Badger J."/>
            <person name="Beckstrom-Sternberg S."/>
            <person name="Saqib M."/>
            <person name="Schutzer S.E."/>
            <person name="Keim P."/>
            <person name="Nierman W.C."/>
        </authorList>
    </citation>
    <scope>NUCLEOTIDE SEQUENCE [LARGE SCALE GENOMIC DNA]</scope>
    <source>
        <strain>NCTC 10229</strain>
    </source>
</reference>
<name>PROB_BURM9</name>
<proteinExistence type="inferred from homology"/>
<sequence>MRSIIADSKRLVVKVGSSLVTNDGRGLDHDAIGRWAAQIAALRGAGKEVVLVSSGAIAEGMQRLGWSKRPREIDELQAAAAVGQMGLAQVYESRFAEHGIRTAQILLTHADLADRERYLNARSTLLTLLRLGVVPIINENDTVVTDEIKFGDNDTLGALVANLIEGDTLVILTDQPGLFTADPRKDPGATLVAEASAGAPELEAMAGGAGSSIGRGGMLTKILAAKRAAHSGANTVIASGRERDVLVRLAAGEAIGTQLIARTARMAARKQWMADHLQVRGHVVIDAGAVDKLTAGGKSLLPIGVVAVQGVFARGEVIACVDDTGREVARGITNYSSAETKLIQRKPSGEIETVLGYMLEPELIHRDNLVLV</sequence>